<name>CYVD_LEOCM</name>
<dbReference type="SMR" id="P84640"/>
<dbReference type="GO" id="GO:0006952">
    <property type="term" value="P:defense response"/>
    <property type="evidence" value="ECO:0000314"/>
    <property type="project" value="UniProtKB"/>
</dbReference>
<dbReference type="InterPro" id="IPR005535">
    <property type="entry name" value="Cyclotide"/>
</dbReference>
<dbReference type="InterPro" id="IPR012323">
    <property type="entry name" value="Cyclotide_bracelet_CS"/>
</dbReference>
<dbReference type="InterPro" id="IPR036146">
    <property type="entry name" value="Cyclotide_sf"/>
</dbReference>
<dbReference type="Pfam" id="PF03784">
    <property type="entry name" value="Cyclotide"/>
    <property type="match status" value="1"/>
</dbReference>
<dbReference type="PIRSF" id="PIRSF037891">
    <property type="entry name" value="Cycloviolacin"/>
    <property type="match status" value="1"/>
</dbReference>
<dbReference type="SUPFAM" id="SSF57038">
    <property type="entry name" value="Cyclotides"/>
    <property type="match status" value="1"/>
</dbReference>
<dbReference type="PROSITE" id="PS51052">
    <property type="entry name" value="CYCLOTIDE"/>
    <property type="match status" value="1"/>
</dbReference>
<dbReference type="PROSITE" id="PS60008">
    <property type="entry name" value="CYCLOTIDE_BRACELET"/>
    <property type="match status" value="1"/>
</dbReference>
<evidence type="ECO:0000250" key="1">
    <source>
        <dbReference type="UniProtKB" id="P56871"/>
    </source>
</evidence>
<evidence type="ECO:0000255" key="2">
    <source>
        <dbReference type="PROSITE-ProRule" id="PRU00395"/>
    </source>
</evidence>
<evidence type="ECO:0000269" key="3">
    <source>
    </source>
</evidence>
<evidence type="ECO:0000305" key="4"/>
<organism>
    <name type="scientific">Leonia cymosa</name>
    <name type="common">Sacha uba</name>
    <dbReference type="NCBI Taxonomy" id="341676"/>
    <lineage>
        <taxon>Eukaryota</taxon>
        <taxon>Viridiplantae</taxon>
        <taxon>Streptophyta</taxon>
        <taxon>Embryophyta</taxon>
        <taxon>Tracheophyta</taxon>
        <taxon>Spermatophyta</taxon>
        <taxon>Magnoliopsida</taxon>
        <taxon>eudicotyledons</taxon>
        <taxon>Gunneridae</taxon>
        <taxon>Pentapetalae</taxon>
        <taxon>rosids</taxon>
        <taxon>fabids</taxon>
        <taxon>Malpighiales</taxon>
        <taxon>Violaceae</taxon>
        <taxon>Leonia</taxon>
    </lineage>
</organism>
<reference evidence="4" key="1">
    <citation type="journal article" date="2000" name="J. Org. Chem.">
        <title>Cycloviolins A-D, anti-HIV macrocyclic peptides from Leonia cymosa.</title>
        <authorList>
            <person name="Hallock Y.F."/>
            <person name="Sowder R.C. II"/>
            <person name="Pannell L.K."/>
            <person name="Hughes C.B."/>
            <person name="Johnson D.G."/>
            <person name="Gulakowski R."/>
            <person name="Cardellina J.H. Jr."/>
            <person name="Boyd M.R."/>
        </authorList>
    </citation>
    <scope>PROTEIN SEQUENCE</scope>
    <scope>FUNCTION</scope>
    <scope>MASS SPECTROMETRY</scope>
    <source>
        <strain evidence="3">Q65T-5650</strain>
        <tissue evidence="3">Bark</tissue>
    </source>
</reference>
<feature type="peptide" id="PRO_0000043606" description="Cycloviolin-D" evidence="2 3">
    <location>
        <begin position="1"/>
        <end position="30"/>
    </location>
</feature>
<feature type="disulfide bond" evidence="1 2">
    <location>
        <begin position="4"/>
        <end position="20"/>
    </location>
</feature>
<feature type="disulfide bond" evidence="1 2">
    <location>
        <begin position="8"/>
        <end position="22"/>
    </location>
</feature>
<feature type="disulfide bond" evidence="1 2">
    <location>
        <begin position="13"/>
        <end position="27"/>
    </location>
</feature>
<feature type="cross-link" description="Cyclopeptide (Gly-Asn)" evidence="3">
    <location>
        <begin position="1"/>
        <end position="30"/>
    </location>
</feature>
<sequence length="30" mass="3171">GFPCGESCVFIPCISAAIGCSCKNKVCYRN</sequence>
<accession>P84640</accession>
<proteinExistence type="evidence at protein level"/>
<protein>
    <recommendedName>
        <fullName>Cycloviolin-D</fullName>
    </recommendedName>
</protein>
<keyword id="KW-0903">Direct protein sequencing</keyword>
<keyword id="KW-1015">Disulfide bond</keyword>
<keyword id="KW-0960">Knottin</keyword>
<keyword id="KW-0611">Plant defense</keyword>
<comment type="function">
    <text evidence="2 3 4">Probably participates in a plant defense mechanism. Has anti-HIV activity.</text>
</comment>
<comment type="domain">
    <text evidence="1">The presence of a 'disulfide through disulfide knot' structurally defines this protein as a knottin.</text>
</comment>
<comment type="PTM">
    <text evidence="2 3">This is a cyclic peptide.</text>
</comment>
<comment type="mass spectrometry" mass="3149.0" method="FAB" evidence="3"/>
<comment type="similarity">
    <text evidence="2">Belongs to the cyclotide family. Bracelet subfamily.</text>
</comment>
<comment type="caution">
    <text evidence="4">This peptide is cyclic. The start position was chosen by similarity to OAK1 (kalata-B1) for which the DNA sequence is known.</text>
</comment>